<sequence>MGLTEQKQKHMEQLSDKNGIISALAFDQRGALKRLMAKYQSEEPTVSQIEALKVLVAEELTPYASSMLLDPEYGLPATKVLDDNAGLLLAYEKTGYDTSSTKRLPDCLDIWSAKRIKEEGADAVKFLLYYDVDSSDEVNEEKEAYIERIGSECVAEDIPFFLEILSYDEKITDSSGIEYAKIKPRKVIEAMKVFSNPRFNIDVLKVEVPVNMDYVEGFAQGETAYNKATAAAYFREQDQATLLPYIFLSAGVPAQLFQETLVFAKEAGAKFNGVLCGRATWAGSVKEYVEKGEAGARQWLRTIGFQNIDELNKILQKTATSWKER</sequence>
<name>LACD1_STRA3</name>
<organism>
    <name type="scientific">Streptococcus agalactiae serotype III (strain NEM316)</name>
    <dbReference type="NCBI Taxonomy" id="211110"/>
    <lineage>
        <taxon>Bacteria</taxon>
        <taxon>Bacillati</taxon>
        <taxon>Bacillota</taxon>
        <taxon>Bacilli</taxon>
        <taxon>Lactobacillales</taxon>
        <taxon>Streptococcaceae</taxon>
        <taxon>Streptococcus</taxon>
    </lineage>
</organism>
<proteinExistence type="inferred from homology"/>
<reference key="1">
    <citation type="journal article" date="2002" name="Mol. Microbiol.">
        <title>Genome sequence of Streptococcus agalactiae, a pathogen causing invasive neonatal disease.</title>
        <authorList>
            <person name="Glaser P."/>
            <person name="Rusniok C."/>
            <person name="Buchrieser C."/>
            <person name="Chevalier F."/>
            <person name="Frangeul L."/>
            <person name="Msadek T."/>
            <person name="Zouine M."/>
            <person name="Couve E."/>
            <person name="Lalioui L."/>
            <person name="Poyart C."/>
            <person name="Trieu-Cuot P."/>
            <person name="Kunst F."/>
        </authorList>
    </citation>
    <scope>NUCLEOTIDE SEQUENCE [LARGE SCALE GENOMIC DNA]</scope>
    <source>
        <strain>NEM316</strain>
    </source>
</reference>
<evidence type="ECO:0000255" key="1">
    <source>
        <dbReference type="HAMAP-Rule" id="MF_00734"/>
    </source>
</evidence>
<comment type="catalytic activity">
    <reaction evidence="1">
        <text>D-tagatofuranose 1,6-bisphosphate = D-glyceraldehyde 3-phosphate + dihydroxyacetone phosphate</text>
        <dbReference type="Rhea" id="RHEA:22948"/>
        <dbReference type="ChEBI" id="CHEBI:57642"/>
        <dbReference type="ChEBI" id="CHEBI:58694"/>
        <dbReference type="ChEBI" id="CHEBI:59776"/>
        <dbReference type="EC" id="4.1.2.40"/>
    </reaction>
</comment>
<comment type="pathway">
    <text evidence="1">Carbohydrate metabolism; D-tagatose 6-phosphate degradation; D-glyceraldehyde 3-phosphate and glycerone phosphate from D-tagatose 6-phosphate: step 2/2.</text>
</comment>
<comment type="similarity">
    <text evidence="1">Belongs to the aldolase LacD family.</text>
</comment>
<accession>Q8E347</accession>
<keyword id="KW-0423">Lactose metabolism</keyword>
<keyword id="KW-0456">Lyase</keyword>
<feature type="chain" id="PRO_0000203954" description="Tagatose 1,6-diphosphate aldolase 1">
    <location>
        <begin position="1"/>
        <end position="325"/>
    </location>
</feature>
<dbReference type="EC" id="4.1.2.40" evidence="1"/>
<dbReference type="EMBL" id="AL766854">
    <property type="protein sequence ID" value="CAD47574.1"/>
    <property type="molecule type" value="Genomic_DNA"/>
</dbReference>
<dbReference type="SMR" id="Q8E347"/>
<dbReference type="KEGG" id="san:gbs1915"/>
<dbReference type="eggNOG" id="COG3684">
    <property type="taxonomic scope" value="Bacteria"/>
</dbReference>
<dbReference type="HOGENOM" id="CLU_058971_0_1_9"/>
<dbReference type="UniPathway" id="UPA00704">
    <property type="reaction ID" value="UER00716"/>
</dbReference>
<dbReference type="Proteomes" id="UP000000823">
    <property type="component" value="Chromosome"/>
</dbReference>
<dbReference type="GO" id="GO:0061595">
    <property type="term" value="F:6-deoxy-6-sulfofructose-1-phosphate aldolase activity"/>
    <property type="evidence" value="ECO:0007669"/>
    <property type="project" value="TreeGrafter"/>
</dbReference>
<dbReference type="GO" id="GO:0009024">
    <property type="term" value="F:tagatose-6-phosphate kinase activity"/>
    <property type="evidence" value="ECO:0007669"/>
    <property type="project" value="InterPro"/>
</dbReference>
<dbReference type="GO" id="GO:0009025">
    <property type="term" value="F:tagatose-bisphosphate aldolase activity"/>
    <property type="evidence" value="ECO:0007669"/>
    <property type="project" value="UniProtKB-UniRule"/>
</dbReference>
<dbReference type="GO" id="GO:1902777">
    <property type="term" value="P:6-sulfoquinovose(1-) catabolic process"/>
    <property type="evidence" value="ECO:0007669"/>
    <property type="project" value="TreeGrafter"/>
</dbReference>
<dbReference type="GO" id="GO:2001059">
    <property type="term" value="P:D-tagatose 6-phosphate catabolic process"/>
    <property type="evidence" value="ECO:0007669"/>
    <property type="project" value="UniProtKB-UniRule"/>
</dbReference>
<dbReference type="GO" id="GO:0019512">
    <property type="term" value="P:lactose catabolic process via tagatose-6-phosphate"/>
    <property type="evidence" value="ECO:0007669"/>
    <property type="project" value="InterPro"/>
</dbReference>
<dbReference type="FunFam" id="3.20.20.70:FF:000137">
    <property type="entry name" value="Tagatose 1,6-diphosphate aldolase 2"/>
    <property type="match status" value="1"/>
</dbReference>
<dbReference type="Gene3D" id="3.20.20.70">
    <property type="entry name" value="Aldolase class I"/>
    <property type="match status" value="1"/>
</dbReference>
<dbReference type="HAMAP" id="MF_00734">
    <property type="entry name" value="LacD"/>
    <property type="match status" value="1"/>
</dbReference>
<dbReference type="InterPro" id="IPR013785">
    <property type="entry name" value="Aldolase_TIM"/>
</dbReference>
<dbReference type="InterPro" id="IPR002915">
    <property type="entry name" value="DeoC/FbaB/LacD_aldolase"/>
</dbReference>
<dbReference type="InterPro" id="IPR050552">
    <property type="entry name" value="LacD_aldolase"/>
</dbReference>
<dbReference type="InterPro" id="IPR005927">
    <property type="entry name" value="Tag_1.6-dipho_adolase"/>
</dbReference>
<dbReference type="NCBIfam" id="TIGR01232">
    <property type="entry name" value="lacD"/>
    <property type="match status" value="1"/>
</dbReference>
<dbReference type="NCBIfam" id="NF003180">
    <property type="entry name" value="PRK04161.1"/>
    <property type="match status" value="1"/>
</dbReference>
<dbReference type="NCBIfam" id="NF009065">
    <property type="entry name" value="PRK12399.1"/>
    <property type="match status" value="1"/>
</dbReference>
<dbReference type="NCBIfam" id="NF009498">
    <property type="entry name" value="PRK12858.1"/>
    <property type="match status" value="1"/>
</dbReference>
<dbReference type="PANTHER" id="PTHR39340">
    <property type="entry name" value="SULFOFRUCTOSEPHOSPHATE ALDOLASE"/>
    <property type="match status" value="1"/>
</dbReference>
<dbReference type="PANTHER" id="PTHR39340:SF1">
    <property type="entry name" value="SULFOFRUCTOSEPHOSPHATE ALDOLASE"/>
    <property type="match status" value="1"/>
</dbReference>
<dbReference type="Pfam" id="PF01791">
    <property type="entry name" value="DeoC"/>
    <property type="match status" value="1"/>
</dbReference>
<dbReference type="SMART" id="SM01133">
    <property type="entry name" value="DeoC"/>
    <property type="match status" value="1"/>
</dbReference>
<dbReference type="SUPFAM" id="SSF51569">
    <property type="entry name" value="Aldolase"/>
    <property type="match status" value="1"/>
</dbReference>
<protein>
    <recommendedName>
        <fullName evidence="1">Tagatose 1,6-diphosphate aldolase 1</fullName>
        <ecNumber evidence="1">4.1.2.40</ecNumber>
    </recommendedName>
    <alternativeName>
        <fullName evidence="1">D-tagatose-1,6-bisphosphate aldolase 1</fullName>
    </alternativeName>
    <alternativeName>
        <fullName evidence="1">Tagatose-bisphosphate aldolase 1</fullName>
    </alternativeName>
</protein>
<gene>
    <name evidence="1" type="primary">lacD1</name>
    <name type="ordered locus">gbs1915</name>
</gene>